<dbReference type="EC" id="1.97.1.12" evidence="1"/>
<dbReference type="EMBL" id="EF380351">
    <property type="protein sequence ID" value="ABQ45301.1"/>
    <property type="molecule type" value="Genomic_DNA"/>
</dbReference>
<dbReference type="RefSeq" id="YP_001294236.1">
    <property type="nucleotide sequence ID" value="NC_009599.1"/>
</dbReference>
<dbReference type="SMR" id="A6MM88"/>
<dbReference type="GeneID" id="5236834"/>
<dbReference type="GO" id="GO:0009535">
    <property type="term" value="C:chloroplast thylakoid membrane"/>
    <property type="evidence" value="ECO:0007669"/>
    <property type="project" value="UniProtKB-SubCell"/>
</dbReference>
<dbReference type="GO" id="GO:0009522">
    <property type="term" value="C:photosystem I"/>
    <property type="evidence" value="ECO:0007669"/>
    <property type="project" value="UniProtKB-KW"/>
</dbReference>
<dbReference type="GO" id="GO:0051539">
    <property type="term" value="F:4 iron, 4 sulfur cluster binding"/>
    <property type="evidence" value="ECO:0007669"/>
    <property type="project" value="UniProtKB-KW"/>
</dbReference>
<dbReference type="GO" id="GO:0009055">
    <property type="term" value="F:electron transfer activity"/>
    <property type="evidence" value="ECO:0007669"/>
    <property type="project" value="UniProtKB-UniRule"/>
</dbReference>
<dbReference type="GO" id="GO:0046872">
    <property type="term" value="F:metal ion binding"/>
    <property type="evidence" value="ECO:0007669"/>
    <property type="project" value="UniProtKB-KW"/>
</dbReference>
<dbReference type="GO" id="GO:0016491">
    <property type="term" value="F:oxidoreductase activity"/>
    <property type="evidence" value="ECO:0007669"/>
    <property type="project" value="UniProtKB-KW"/>
</dbReference>
<dbReference type="GO" id="GO:0009773">
    <property type="term" value="P:photosynthetic electron transport in photosystem I"/>
    <property type="evidence" value="ECO:0007669"/>
    <property type="project" value="InterPro"/>
</dbReference>
<dbReference type="FunFam" id="3.30.70.20:FF:000001">
    <property type="entry name" value="Photosystem I iron-sulfur center"/>
    <property type="match status" value="1"/>
</dbReference>
<dbReference type="Gene3D" id="3.30.70.20">
    <property type="match status" value="1"/>
</dbReference>
<dbReference type="HAMAP" id="MF_01303">
    <property type="entry name" value="PSI_PsaC"/>
    <property type="match status" value="1"/>
</dbReference>
<dbReference type="InterPro" id="IPR017896">
    <property type="entry name" value="4Fe4S_Fe-S-bd"/>
</dbReference>
<dbReference type="InterPro" id="IPR017900">
    <property type="entry name" value="4Fe4S_Fe_S_CS"/>
</dbReference>
<dbReference type="InterPro" id="IPR050157">
    <property type="entry name" value="PSI_iron-sulfur_center"/>
</dbReference>
<dbReference type="InterPro" id="IPR017491">
    <property type="entry name" value="PSI_PsaC"/>
</dbReference>
<dbReference type="NCBIfam" id="TIGR03048">
    <property type="entry name" value="PS_I_psaC"/>
    <property type="match status" value="1"/>
</dbReference>
<dbReference type="PANTHER" id="PTHR24960:SF79">
    <property type="entry name" value="PHOTOSYSTEM I IRON-SULFUR CENTER"/>
    <property type="match status" value="1"/>
</dbReference>
<dbReference type="PANTHER" id="PTHR24960">
    <property type="entry name" value="PHOTOSYSTEM I IRON-SULFUR CENTER-RELATED"/>
    <property type="match status" value="1"/>
</dbReference>
<dbReference type="Pfam" id="PF14697">
    <property type="entry name" value="Fer4_21"/>
    <property type="match status" value="1"/>
</dbReference>
<dbReference type="SUPFAM" id="SSF54862">
    <property type="entry name" value="4Fe-4S ferredoxins"/>
    <property type="match status" value="1"/>
</dbReference>
<dbReference type="PROSITE" id="PS00198">
    <property type="entry name" value="4FE4S_FER_1"/>
    <property type="match status" value="2"/>
</dbReference>
<dbReference type="PROSITE" id="PS51379">
    <property type="entry name" value="4FE4S_FER_2"/>
    <property type="match status" value="2"/>
</dbReference>
<feature type="chain" id="PRO_0000322032" description="Photosystem I iron-sulfur center">
    <location>
        <begin position="1"/>
        <end position="81"/>
    </location>
</feature>
<feature type="domain" description="4Fe-4S ferredoxin-type 1" evidence="1">
    <location>
        <begin position="2"/>
        <end position="31"/>
    </location>
</feature>
<feature type="domain" description="4Fe-4S ferredoxin-type 2" evidence="1">
    <location>
        <begin position="39"/>
        <end position="68"/>
    </location>
</feature>
<feature type="binding site" evidence="1">
    <location>
        <position position="11"/>
    </location>
    <ligand>
        <name>[4Fe-4S] cluster</name>
        <dbReference type="ChEBI" id="CHEBI:49883"/>
        <label>1</label>
    </ligand>
</feature>
<feature type="binding site" evidence="1">
    <location>
        <position position="14"/>
    </location>
    <ligand>
        <name>[4Fe-4S] cluster</name>
        <dbReference type="ChEBI" id="CHEBI:49883"/>
        <label>1</label>
    </ligand>
</feature>
<feature type="binding site" evidence="1">
    <location>
        <position position="17"/>
    </location>
    <ligand>
        <name>[4Fe-4S] cluster</name>
        <dbReference type="ChEBI" id="CHEBI:49883"/>
        <label>1</label>
    </ligand>
</feature>
<feature type="binding site" evidence="1">
    <location>
        <position position="21"/>
    </location>
    <ligand>
        <name>[4Fe-4S] cluster</name>
        <dbReference type="ChEBI" id="CHEBI:49883"/>
        <label>2</label>
    </ligand>
</feature>
<feature type="binding site" evidence="1">
    <location>
        <position position="48"/>
    </location>
    <ligand>
        <name>[4Fe-4S] cluster</name>
        <dbReference type="ChEBI" id="CHEBI:49883"/>
        <label>2</label>
    </ligand>
</feature>
<feature type="binding site" evidence="1">
    <location>
        <position position="51"/>
    </location>
    <ligand>
        <name>[4Fe-4S] cluster</name>
        <dbReference type="ChEBI" id="CHEBI:49883"/>
        <label>2</label>
    </ligand>
</feature>
<feature type="binding site" evidence="1">
    <location>
        <position position="54"/>
    </location>
    <ligand>
        <name>[4Fe-4S] cluster</name>
        <dbReference type="ChEBI" id="CHEBI:49883"/>
        <label>2</label>
    </ligand>
</feature>
<feature type="binding site" evidence="1">
    <location>
        <position position="58"/>
    </location>
    <ligand>
        <name>[4Fe-4S] cluster</name>
        <dbReference type="ChEBI" id="CHEBI:49883"/>
        <label>1</label>
    </ligand>
</feature>
<reference key="1">
    <citation type="journal article" date="2007" name="Mol. Phylogenet. Evol.">
        <title>Phylogenetic and evolutionary implications of complete chloroplast genome sequences of four early-diverging angiosperms: Buxus (Buxaceae), Chloranthus (Chloranthaceae), Dioscorea (Dioscoreaceae), and Illicium (Schisandraceae).</title>
        <authorList>
            <person name="Hansen D.R."/>
            <person name="Dastidar S.G."/>
            <person name="Cai Z."/>
            <person name="Penaflor C."/>
            <person name="Kuehl J.V."/>
            <person name="Boore J.L."/>
            <person name="Jansen R.K."/>
        </authorList>
    </citation>
    <scope>NUCLEOTIDE SEQUENCE [LARGE SCALE GENOMIC DNA]</scope>
</reference>
<protein>
    <recommendedName>
        <fullName evidence="1">Photosystem I iron-sulfur center</fullName>
        <ecNumber evidence="1">1.97.1.12</ecNumber>
    </recommendedName>
    <alternativeName>
        <fullName evidence="1">9 kDa polypeptide</fullName>
    </alternativeName>
    <alternativeName>
        <fullName evidence="1">PSI-C</fullName>
    </alternativeName>
    <alternativeName>
        <fullName evidence="1">Photosystem I subunit VII</fullName>
    </alternativeName>
    <alternativeName>
        <fullName evidence="1">PsaC</fullName>
    </alternativeName>
</protein>
<gene>
    <name evidence="1" type="primary">psaC</name>
</gene>
<proteinExistence type="inferred from homology"/>
<name>PSAC_BUXMI</name>
<accession>A6MM88</accession>
<sequence>MSHSVKIYDTCIGCTQCVRACPTDVLEMIPWDGCKAKQIASAPRTEDCVGCKRCESACPTDFLSVRVYLWHETTRSMGLAY</sequence>
<comment type="function">
    <text evidence="1">Apoprotein for the two 4Fe-4S centers FA and FB of photosystem I (PSI); essential for photochemical activity. FB is the terminal electron acceptor of PSI, donating electrons to ferredoxin. The C-terminus interacts with PsaA/B/D and helps assemble the protein into the PSI complex. Required for binding of PsaD and PsaE to PSI. PSI is a plastocyanin-ferredoxin oxidoreductase, converting photonic excitation into a charge separation, which transfers an electron from the donor P700 chlorophyll pair to the spectroscopically characterized acceptors A0, A1, FX, FA and FB in turn.</text>
</comment>
<comment type="catalytic activity">
    <reaction evidence="1">
        <text>reduced [plastocyanin] + hnu + oxidized [2Fe-2S]-[ferredoxin] = oxidized [plastocyanin] + reduced [2Fe-2S]-[ferredoxin]</text>
        <dbReference type="Rhea" id="RHEA:30407"/>
        <dbReference type="Rhea" id="RHEA-COMP:10000"/>
        <dbReference type="Rhea" id="RHEA-COMP:10001"/>
        <dbReference type="Rhea" id="RHEA-COMP:10039"/>
        <dbReference type="Rhea" id="RHEA-COMP:10040"/>
        <dbReference type="ChEBI" id="CHEBI:29036"/>
        <dbReference type="ChEBI" id="CHEBI:30212"/>
        <dbReference type="ChEBI" id="CHEBI:33737"/>
        <dbReference type="ChEBI" id="CHEBI:33738"/>
        <dbReference type="ChEBI" id="CHEBI:49552"/>
        <dbReference type="EC" id="1.97.1.12"/>
    </reaction>
</comment>
<comment type="cofactor">
    <cofactor evidence="1">
        <name>[4Fe-4S] cluster</name>
        <dbReference type="ChEBI" id="CHEBI:49883"/>
    </cofactor>
    <text evidence="1">Binds 2 [4Fe-4S] clusters. Cluster 2 is most probably the spectroscopically characterized electron acceptor FA and cluster 1 is most probably FB.</text>
</comment>
<comment type="subunit">
    <text evidence="1">The eukaryotic PSI reaction center is composed of at least 11 subunits.</text>
</comment>
<comment type="subcellular location">
    <subcellularLocation>
        <location evidence="1">Plastid</location>
        <location evidence="1">Chloroplast thylakoid membrane</location>
        <topology evidence="1">Peripheral membrane protein</topology>
        <orientation evidence="1">Stromal side</orientation>
    </subcellularLocation>
</comment>
<keyword id="KW-0004">4Fe-4S</keyword>
<keyword id="KW-0150">Chloroplast</keyword>
<keyword id="KW-0249">Electron transport</keyword>
<keyword id="KW-0408">Iron</keyword>
<keyword id="KW-0411">Iron-sulfur</keyword>
<keyword id="KW-0472">Membrane</keyword>
<keyword id="KW-0479">Metal-binding</keyword>
<keyword id="KW-0560">Oxidoreductase</keyword>
<keyword id="KW-0602">Photosynthesis</keyword>
<keyword id="KW-0603">Photosystem I</keyword>
<keyword id="KW-0934">Plastid</keyword>
<keyword id="KW-0677">Repeat</keyword>
<keyword id="KW-0793">Thylakoid</keyword>
<keyword id="KW-0813">Transport</keyword>
<geneLocation type="chloroplast"/>
<organism>
    <name type="scientific">Buxus microphylla</name>
    <name type="common">Littleleaf boxwood</name>
    <name type="synonym">Japanese boxwood</name>
    <dbReference type="NCBI Taxonomy" id="153571"/>
    <lineage>
        <taxon>Eukaryota</taxon>
        <taxon>Viridiplantae</taxon>
        <taxon>Streptophyta</taxon>
        <taxon>Embryophyta</taxon>
        <taxon>Tracheophyta</taxon>
        <taxon>Spermatophyta</taxon>
        <taxon>Magnoliopsida</taxon>
        <taxon>Buxales</taxon>
        <taxon>Buxaceae</taxon>
        <taxon>Buxus</taxon>
    </lineage>
</organism>
<evidence type="ECO:0000255" key="1">
    <source>
        <dbReference type="HAMAP-Rule" id="MF_01303"/>
    </source>
</evidence>